<protein>
    <recommendedName>
        <fullName evidence="1">tRNA pseudouridine synthase B</fullName>
        <ecNumber evidence="1">5.4.99.25</ecNumber>
    </recommendedName>
    <alternativeName>
        <fullName evidence="1">tRNA pseudouridine(55) synthase</fullName>
        <shortName evidence="1">Psi55 synthase</shortName>
    </alternativeName>
    <alternativeName>
        <fullName evidence="1">tRNA pseudouridylate synthase</fullName>
    </alternativeName>
    <alternativeName>
        <fullName evidence="1">tRNA-uridine isomerase</fullName>
    </alternativeName>
</protein>
<gene>
    <name evidence="1" type="primary">truB</name>
    <name type="ordered locus">HI_1289</name>
</gene>
<sequence length="312" mass="35085">MSRPRKRWRDVDGVFLLDKPQGMSSNDIMQKVKRLFQANKAGHTGALDPLATGMLPICLGEATKFSQFLLDADKRYLVTAKLGERTDTSDAEGQVVETREVNLETQQILTALEQFRGDILQVPTMFSALKHNGKPLYEYARQGITVEREARPITIFELNFIEYNAPFLTLEVHCSKGTYIRTLVDDLGEVLGCGAHVTMLRRTAVADYPVAEMMPINELQLLAESFPLSELDRLLLPTDTAVSKLPALHLDAEQSKAIGFGQRVKFANEQQLSGQVRLFSAENLFLGVLNRREYYSPTTINYTIRITSLPFL</sequence>
<evidence type="ECO:0000255" key="1">
    <source>
        <dbReference type="HAMAP-Rule" id="MF_01080"/>
    </source>
</evidence>
<feature type="chain" id="PRO_0000121843" description="tRNA pseudouridine synthase B">
    <location>
        <begin position="1"/>
        <end position="312"/>
    </location>
</feature>
<feature type="active site" description="Nucleophile" evidence="1">
    <location>
        <position position="48"/>
    </location>
</feature>
<comment type="function">
    <text evidence="1">Responsible for synthesis of pseudouridine from uracil-55 in the psi GC loop of transfer RNAs.</text>
</comment>
<comment type="catalytic activity">
    <reaction evidence="1">
        <text>uridine(55) in tRNA = pseudouridine(55) in tRNA</text>
        <dbReference type="Rhea" id="RHEA:42532"/>
        <dbReference type="Rhea" id="RHEA-COMP:10101"/>
        <dbReference type="Rhea" id="RHEA-COMP:10102"/>
        <dbReference type="ChEBI" id="CHEBI:65314"/>
        <dbReference type="ChEBI" id="CHEBI:65315"/>
        <dbReference type="EC" id="5.4.99.25"/>
    </reaction>
</comment>
<comment type="similarity">
    <text evidence="1">Belongs to the pseudouridine synthase TruB family. Type 1 subfamily.</text>
</comment>
<dbReference type="EC" id="5.4.99.25" evidence="1"/>
<dbReference type="EMBL" id="L42023">
    <property type="protein sequence ID" value="AAC22938.1"/>
    <property type="molecule type" value="Genomic_DNA"/>
</dbReference>
<dbReference type="PIR" id="B64170">
    <property type="entry name" value="B64170"/>
</dbReference>
<dbReference type="RefSeq" id="NP_439441.1">
    <property type="nucleotide sequence ID" value="NC_000907.1"/>
</dbReference>
<dbReference type="SMR" id="P45142"/>
<dbReference type="STRING" id="71421.HI_1289"/>
<dbReference type="EnsemblBacteria" id="AAC22938">
    <property type="protein sequence ID" value="AAC22938"/>
    <property type="gene ID" value="HI_1289"/>
</dbReference>
<dbReference type="KEGG" id="hin:HI_1289"/>
<dbReference type="PATRIC" id="fig|71421.8.peg.1341"/>
<dbReference type="eggNOG" id="COG0130">
    <property type="taxonomic scope" value="Bacteria"/>
</dbReference>
<dbReference type="HOGENOM" id="CLU_032087_0_3_6"/>
<dbReference type="OrthoDB" id="9802309at2"/>
<dbReference type="PhylomeDB" id="P45142"/>
<dbReference type="BioCyc" id="HINF71421:G1GJ1-1315-MONOMER"/>
<dbReference type="Proteomes" id="UP000000579">
    <property type="component" value="Chromosome"/>
</dbReference>
<dbReference type="GO" id="GO:0009982">
    <property type="term" value="F:pseudouridine synthase activity"/>
    <property type="evidence" value="ECO:0000318"/>
    <property type="project" value="GO_Central"/>
</dbReference>
<dbReference type="GO" id="GO:0003723">
    <property type="term" value="F:RNA binding"/>
    <property type="evidence" value="ECO:0007669"/>
    <property type="project" value="InterPro"/>
</dbReference>
<dbReference type="GO" id="GO:0160148">
    <property type="term" value="F:tRNA pseudouridine(55) synthase activity"/>
    <property type="evidence" value="ECO:0007669"/>
    <property type="project" value="UniProtKB-EC"/>
</dbReference>
<dbReference type="GO" id="GO:1990481">
    <property type="term" value="P:mRNA pseudouridine synthesis"/>
    <property type="evidence" value="ECO:0000318"/>
    <property type="project" value="GO_Central"/>
</dbReference>
<dbReference type="GO" id="GO:0006400">
    <property type="term" value="P:tRNA modification"/>
    <property type="evidence" value="ECO:0000318"/>
    <property type="project" value="GO_Central"/>
</dbReference>
<dbReference type="GO" id="GO:0031119">
    <property type="term" value="P:tRNA pseudouridine synthesis"/>
    <property type="evidence" value="ECO:0007669"/>
    <property type="project" value="UniProtKB-UniRule"/>
</dbReference>
<dbReference type="CDD" id="cd02573">
    <property type="entry name" value="PseudoU_synth_EcTruB"/>
    <property type="match status" value="1"/>
</dbReference>
<dbReference type="CDD" id="cd21152">
    <property type="entry name" value="PUA_TruB_bacterial"/>
    <property type="match status" value="1"/>
</dbReference>
<dbReference type="FunFam" id="3.30.2350.10:FF:000003">
    <property type="entry name" value="tRNA pseudouridine synthase B"/>
    <property type="match status" value="1"/>
</dbReference>
<dbReference type="Gene3D" id="3.30.2350.10">
    <property type="entry name" value="Pseudouridine synthase"/>
    <property type="match status" value="1"/>
</dbReference>
<dbReference type="Gene3D" id="2.30.130.10">
    <property type="entry name" value="PUA domain"/>
    <property type="match status" value="1"/>
</dbReference>
<dbReference type="HAMAP" id="MF_01080">
    <property type="entry name" value="TruB_bact"/>
    <property type="match status" value="1"/>
</dbReference>
<dbReference type="InterPro" id="IPR020103">
    <property type="entry name" value="PsdUridine_synth_cat_dom_sf"/>
</dbReference>
<dbReference type="InterPro" id="IPR002501">
    <property type="entry name" value="PsdUridine_synth_N"/>
</dbReference>
<dbReference type="InterPro" id="IPR036974">
    <property type="entry name" value="PUA_sf"/>
</dbReference>
<dbReference type="InterPro" id="IPR014780">
    <property type="entry name" value="tRNA_psdUridine_synth_TruB"/>
</dbReference>
<dbReference type="InterPro" id="IPR015240">
    <property type="entry name" value="tRNA_sdUridine_synth_fam1_C"/>
</dbReference>
<dbReference type="InterPro" id="IPR032819">
    <property type="entry name" value="TruB_C"/>
</dbReference>
<dbReference type="NCBIfam" id="TIGR00431">
    <property type="entry name" value="TruB"/>
    <property type="match status" value="1"/>
</dbReference>
<dbReference type="PANTHER" id="PTHR13767:SF2">
    <property type="entry name" value="PSEUDOURIDYLATE SYNTHASE TRUB1"/>
    <property type="match status" value="1"/>
</dbReference>
<dbReference type="PANTHER" id="PTHR13767">
    <property type="entry name" value="TRNA-PSEUDOURIDINE SYNTHASE"/>
    <property type="match status" value="1"/>
</dbReference>
<dbReference type="Pfam" id="PF09157">
    <property type="entry name" value="TruB-C_2"/>
    <property type="match status" value="1"/>
</dbReference>
<dbReference type="Pfam" id="PF16198">
    <property type="entry name" value="TruB_C_2"/>
    <property type="match status" value="1"/>
</dbReference>
<dbReference type="Pfam" id="PF01509">
    <property type="entry name" value="TruB_N"/>
    <property type="match status" value="1"/>
</dbReference>
<dbReference type="SUPFAM" id="SSF55120">
    <property type="entry name" value="Pseudouridine synthase"/>
    <property type="match status" value="1"/>
</dbReference>
<keyword id="KW-0413">Isomerase</keyword>
<keyword id="KW-1185">Reference proteome</keyword>
<keyword id="KW-0819">tRNA processing</keyword>
<organism>
    <name type="scientific">Haemophilus influenzae (strain ATCC 51907 / DSM 11121 / KW20 / Rd)</name>
    <dbReference type="NCBI Taxonomy" id="71421"/>
    <lineage>
        <taxon>Bacteria</taxon>
        <taxon>Pseudomonadati</taxon>
        <taxon>Pseudomonadota</taxon>
        <taxon>Gammaproteobacteria</taxon>
        <taxon>Pasteurellales</taxon>
        <taxon>Pasteurellaceae</taxon>
        <taxon>Haemophilus</taxon>
    </lineage>
</organism>
<reference key="1">
    <citation type="journal article" date="1995" name="Science">
        <title>Whole-genome random sequencing and assembly of Haemophilus influenzae Rd.</title>
        <authorList>
            <person name="Fleischmann R.D."/>
            <person name="Adams M.D."/>
            <person name="White O."/>
            <person name="Clayton R.A."/>
            <person name="Kirkness E.F."/>
            <person name="Kerlavage A.R."/>
            <person name="Bult C.J."/>
            <person name="Tomb J.-F."/>
            <person name="Dougherty B.A."/>
            <person name="Merrick J.M."/>
            <person name="McKenney K."/>
            <person name="Sutton G.G."/>
            <person name="FitzHugh W."/>
            <person name="Fields C.A."/>
            <person name="Gocayne J.D."/>
            <person name="Scott J.D."/>
            <person name="Shirley R."/>
            <person name="Liu L.-I."/>
            <person name="Glodek A."/>
            <person name="Kelley J.M."/>
            <person name="Weidman J.F."/>
            <person name="Phillips C.A."/>
            <person name="Spriggs T."/>
            <person name="Hedblom E."/>
            <person name="Cotton M.D."/>
            <person name="Utterback T.R."/>
            <person name="Hanna M.C."/>
            <person name="Nguyen D.T."/>
            <person name="Saudek D.M."/>
            <person name="Brandon R.C."/>
            <person name="Fine L.D."/>
            <person name="Fritchman J.L."/>
            <person name="Fuhrmann J.L."/>
            <person name="Geoghagen N.S.M."/>
            <person name="Gnehm C.L."/>
            <person name="McDonald L.A."/>
            <person name="Small K.V."/>
            <person name="Fraser C.M."/>
            <person name="Smith H.O."/>
            <person name="Venter J.C."/>
        </authorList>
    </citation>
    <scope>NUCLEOTIDE SEQUENCE [LARGE SCALE GENOMIC DNA]</scope>
    <source>
        <strain>ATCC 51907 / DSM 11121 / KW20 / Rd</strain>
    </source>
</reference>
<accession>P45142</accession>
<proteinExistence type="inferred from homology"/>
<name>TRUB_HAEIN</name>